<reference key="1">
    <citation type="journal article" date="1991" name="Gene">
        <title>Cloning of an aminoglycoside-resistance-encoding gene, kamC, from Saccharopolyspora hirsuta: comparison with kamB from Streptomyces tenebrarius.</title>
        <authorList>
            <person name="Holmes D.J."/>
            <person name="Drocourt D."/>
            <person name="Tiraby G."/>
            <person name="Cundiffe E."/>
        </authorList>
    </citation>
    <scope>NUCLEOTIDE SEQUENCE [GENOMIC DNA]</scope>
    <source>
        <strain>CL102</strain>
    </source>
</reference>
<name>KAMC_SACHI</name>
<sequence length="156" mass="16757">MQKIAGKAAASPKKGGAPNLLCVWASAEKPPPELARVTELHSLMPWGSLLRGMLGSDTEMRPGLAELCVPGAEFLITLNLHAWRPPVPEVGDHPEPTPESAMELLAPYYAAAGWTLEEARYFGAEELDALATSWTRRLGSTRDELDVLGITGVIGK</sequence>
<keyword id="KW-0046">Antibiotic resistance</keyword>
<keyword id="KW-0489">Methyltransferase</keyword>
<keyword id="KW-0808">Transferase</keyword>
<feature type="chain" id="PRO_0000068565" description="rRNA methyltransferase">
    <location>
        <begin position="1"/>
        <end position="156"/>
    </location>
</feature>
<gene>
    <name type="primary">kamC</name>
</gene>
<organism>
    <name type="scientific">Saccharopolyspora hirsuta</name>
    <dbReference type="NCBI Taxonomy" id="1837"/>
    <lineage>
        <taxon>Bacteria</taxon>
        <taxon>Bacillati</taxon>
        <taxon>Actinomycetota</taxon>
        <taxon>Actinomycetes</taxon>
        <taxon>Pseudonocardiales</taxon>
        <taxon>Pseudonocardiaceae</taxon>
        <taxon>Saccharopolyspora</taxon>
    </lineage>
</organism>
<proteinExistence type="predicted"/>
<protein>
    <recommendedName>
        <fullName>rRNA methyltransferase</fullName>
        <ecNumber>2.1.1.-</ecNumber>
    </recommendedName>
    <alternativeName>
        <fullName>Kanamycin-apramycin resistance methylase</fullName>
    </alternativeName>
</protein>
<comment type="function">
    <text>Modifies 16S rRNA so making ribosomes resistant to certain aminoglycosides.</text>
</comment>
<accession>P25919</accession>
<dbReference type="EC" id="2.1.1.-"/>
<dbReference type="EMBL" id="M64626">
    <property type="protein sequence ID" value="AAA26499.1"/>
    <property type="molecule type" value="Genomic_DNA"/>
</dbReference>
<dbReference type="PIR" id="JQ1138">
    <property type="entry name" value="JQ1138"/>
</dbReference>
<dbReference type="SMR" id="P25919"/>
<dbReference type="GO" id="GO:0008168">
    <property type="term" value="F:methyltransferase activity"/>
    <property type="evidence" value="ECO:0007669"/>
    <property type="project" value="UniProtKB-KW"/>
</dbReference>
<dbReference type="GO" id="GO:0032259">
    <property type="term" value="P:methylation"/>
    <property type="evidence" value="ECO:0007669"/>
    <property type="project" value="UniProtKB-KW"/>
</dbReference>
<dbReference type="GO" id="GO:0046677">
    <property type="term" value="P:response to antibiotic"/>
    <property type="evidence" value="ECO:0007669"/>
    <property type="project" value="UniProtKB-KW"/>
</dbReference>
<dbReference type="Gene3D" id="3.40.50.150">
    <property type="entry name" value="Vaccinia Virus protein VP39"/>
    <property type="match status" value="1"/>
</dbReference>
<dbReference type="InterPro" id="IPR056262">
    <property type="entry name" value="NpmA"/>
</dbReference>
<dbReference type="InterPro" id="IPR029063">
    <property type="entry name" value="SAM-dependent_MTases_sf"/>
</dbReference>
<dbReference type="Pfam" id="PF24675">
    <property type="entry name" value="NpmA"/>
    <property type="match status" value="1"/>
</dbReference>